<name>RSGA_XANAC</name>
<organism>
    <name type="scientific">Xanthomonas axonopodis pv. citri (strain 306)</name>
    <dbReference type="NCBI Taxonomy" id="190486"/>
    <lineage>
        <taxon>Bacteria</taxon>
        <taxon>Pseudomonadati</taxon>
        <taxon>Pseudomonadota</taxon>
        <taxon>Gammaproteobacteria</taxon>
        <taxon>Lysobacterales</taxon>
        <taxon>Lysobacteraceae</taxon>
        <taxon>Xanthomonas</taxon>
    </lineage>
</organism>
<keyword id="KW-0963">Cytoplasm</keyword>
<keyword id="KW-0342">GTP-binding</keyword>
<keyword id="KW-0378">Hydrolase</keyword>
<keyword id="KW-0479">Metal-binding</keyword>
<keyword id="KW-0547">Nucleotide-binding</keyword>
<keyword id="KW-0690">Ribosome biogenesis</keyword>
<keyword id="KW-0694">RNA-binding</keyword>
<keyword id="KW-0699">rRNA-binding</keyword>
<keyword id="KW-0862">Zinc</keyword>
<reference key="1">
    <citation type="journal article" date="2002" name="Nature">
        <title>Comparison of the genomes of two Xanthomonas pathogens with differing host specificities.</title>
        <authorList>
            <person name="da Silva A.C.R."/>
            <person name="Ferro J.A."/>
            <person name="Reinach F.C."/>
            <person name="Farah C.S."/>
            <person name="Furlan L.R."/>
            <person name="Quaggio R.B."/>
            <person name="Monteiro-Vitorello C.B."/>
            <person name="Van Sluys M.A."/>
            <person name="Almeida N.F. Jr."/>
            <person name="Alves L.M.C."/>
            <person name="do Amaral A.M."/>
            <person name="Bertolini M.C."/>
            <person name="Camargo L.E.A."/>
            <person name="Camarotte G."/>
            <person name="Cannavan F."/>
            <person name="Cardozo J."/>
            <person name="Chambergo F."/>
            <person name="Ciapina L.P."/>
            <person name="Cicarelli R.M.B."/>
            <person name="Coutinho L.L."/>
            <person name="Cursino-Santos J.R."/>
            <person name="El-Dorry H."/>
            <person name="Faria J.B."/>
            <person name="Ferreira A.J.S."/>
            <person name="Ferreira R.C.C."/>
            <person name="Ferro M.I.T."/>
            <person name="Formighieri E.F."/>
            <person name="Franco M.C."/>
            <person name="Greggio C.C."/>
            <person name="Gruber A."/>
            <person name="Katsuyama A.M."/>
            <person name="Kishi L.T."/>
            <person name="Leite R.P."/>
            <person name="Lemos E.G.M."/>
            <person name="Lemos M.V.F."/>
            <person name="Locali E.C."/>
            <person name="Machado M.A."/>
            <person name="Madeira A.M.B.N."/>
            <person name="Martinez-Rossi N.M."/>
            <person name="Martins E.C."/>
            <person name="Meidanis J."/>
            <person name="Menck C.F.M."/>
            <person name="Miyaki C.Y."/>
            <person name="Moon D.H."/>
            <person name="Moreira L.M."/>
            <person name="Novo M.T.M."/>
            <person name="Okura V.K."/>
            <person name="Oliveira M.C."/>
            <person name="Oliveira V.R."/>
            <person name="Pereira H.A."/>
            <person name="Rossi A."/>
            <person name="Sena J.A.D."/>
            <person name="Silva C."/>
            <person name="de Souza R.F."/>
            <person name="Spinola L.A.F."/>
            <person name="Takita M.A."/>
            <person name="Tamura R.E."/>
            <person name="Teixeira E.C."/>
            <person name="Tezza R.I.D."/>
            <person name="Trindade dos Santos M."/>
            <person name="Truffi D."/>
            <person name="Tsai S.M."/>
            <person name="White F.F."/>
            <person name="Setubal J.C."/>
            <person name="Kitajima J.P."/>
        </authorList>
    </citation>
    <scope>NUCLEOTIDE SEQUENCE [LARGE SCALE GENOMIC DNA]</scope>
    <source>
        <strain>306</strain>
    </source>
</reference>
<proteinExistence type="inferred from homology"/>
<dbReference type="EC" id="3.6.1.-" evidence="1"/>
<dbReference type="EMBL" id="AE008923">
    <property type="protein sequence ID" value="AAM38336.1"/>
    <property type="molecule type" value="Genomic_DNA"/>
</dbReference>
<dbReference type="RefSeq" id="WP_011052312.1">
    <property type="nucleotide sequence ID" value="NC_003919.1"/>
</dbReference>
<dbReference type="SMR" id="Q8PGW9"/>
<dbReference type="GeneID" id="66912536"/>
<dbReference type="KEGG" id="xac:XAC3493"/>
<dbReference type="eggNOG" id="COG1162">
    <property type="taxonomic scope" value="Bacteria"/>
</dbReference>
<dbReference type="HOGENOM" id="CLU_033617_0_1_6"/>
<dbReference type="Proteomes" id="UP000000576">
    <property type="component" value="Chromosome"/>
</dbReference>
<dbReference type="GO" id="GO:0005737">
    <property type="term" value="C:cytoplasm"/>
    <property type="evidence" value="ECO:0007669"/>
    <property type="project" value="UniProtKB-SubCell"/>
</dbReference>
<dbReference type="GO" id="GO:0005525">
    <property type="term" value="F:GTP binding"/>
    <property type="evidence" value="ECO:0007669"/>
    <property type="project" value="UniProtKB-UniRule"/>
</dbReference>
<dbReference type="GO" id="GO:0003924">
    <property type="term" value="F:GTPase activity"/>
    <property type="evidence" value="ECO:0007669"/>
    <property type="project" value="UniProtKB-UniRule"/>
</dbReference>
<dbReference type="GO" id="GO:0046872">
    <property type="term" value="F:metal ion binding"/>
    <property type="evidence" value="ECO:0007669"/>
    <property type="project" value="UniProtKB-KW"/>
</dbReference>
<dbReference type="GO" id="GO:0019843">
    <property type="term" value="F:rRNA binding"/>
    <property type="evidence" value="ECO:0007669"/>
    <property type="project" value="UniProtKB-KW"/>
</dbReference>
<dbReference type="GO" id="GO:0042274">
    <property type="term" value="P:ribosomal small subunit biogenesis"/>
    <property type="evidence" value="ECO:0007669"/>
    <property type="project" value="UniProtKB-UniRule"/>
</dbReference>
<dbReference type="CDD" id="cd01854">
    <property type="entry name" value="YjeQ_EngC"/>
    <property type="match status" value="1"/>
</dbReference>
<dbReference type="Gene3D" id="3.40.50.300">
    <property type="entry name" value="P-loop containing nucleotide triphosphate hydrolases"/>
    <property type="match status" value="1"/>
</dbReference>
<dbReference type="Gene3D" id="1.10.40.50">
    <property type="entry name" value="Probable gtpase engc, domain 3"/>
    <property type="match status" value="1"/>
</dbReference>
<dbReference type="HAMAP" id="MF_01820">
    <property type="entry name" value="GTPase_RsgA"/>
    <property type="match status" value="1"/>
</dbReference>
<dbReference type="InterPro" id="IPR030378">
    <property type="entry name" value="G_CP_dom"/>
</dbReference>
<dbReference type="InterPro" id="IPR027417">
    <property type="entry name" value="P-loop_NTPase"/>
</dbReference>
<dbReference type="InterPro" id="IPR004881">
    <property type="entry name" value="Ribosome_biogen_GTPase_RsgA"/>
</dbReference>
<dbReference type="InterPro" id="IPR010914">
    <property type="entry name" value="RsgA_GTPase_dom"/>
</dbReference>
<dbReference type="NCBIfam" id="TIGR00157">
    <property type="entry name" value="ribosome small subunit-dependent GTPase A"/>
    <property type="match status" value="1"/>
</dbReference>
<dbReference type="PANTHER" id="PTHR32120">
    <property type="entry name" value="SMALL RIBOSOMAL SUBUNIT BIOGENESIS GTPASE RSGA"/>
    <property type="match status" value="1"/>
</dbReference>
<dbReference type="PANTHER" id="PTHR32120:SF10">
    <property type="entry name" value="SMALL RIBOSOMAL SUBUNIT BIOGENESIS GTPASE RSGA"/>
    <property type="match status" value="1"/>
</dbReference>
<dbReference type="Pfam" id="PF03193">
    <property type="entry name" value="RsgA_GTPase"/>
    <property type="match status" value="1"/>
</dbReference>
<dbReference type="SUPFAM" id="SSF52540">
    <property type="entry name" value="P-loop containing nucleoside triphosphate hydrolases"/>
    <property type="match status" value="1"/>
</dbReference>
<dbReference type="PROSITE" id="PS50936">
    <property type="entry name" value="ENGC_GTPASE"/>
    <property type="match status" value="1"/>
</dbReference>
<dbReference type="PROSITE" id="PS51721">
    <property type="entry name" value="G_CP"/>
    <property type="match status" value="1"/>
</dbReference>
<evidence type="ECO:0000255" key="1">
    <source>
        <dbReference type="HAMAP-Rule" id="MF_01820"/>
    </source>
</evidence>
<evidence type="ECO:0000255" key="2">
    <source>
        <dbReference type="PROSITE-ProRule" id="PRU01058"/>
    </source>
</evidence>
<evidence type="ECO:0000256" key="3">
    <source>
        <dbReference type="SAM" id="MobiDB-lite"/>
    </source>
</evidence>
<feature type="chain" id="PRO_0000171546" description="Small ribosomal subunit biogenesis GTPase RsgA">
    <location>
        <begin position="1"/>
        <end position="363"/>
    </location>
</feature>
<feature type="domain" description="CP-type G" evidence="2">
    <location>
        <begin position="112"/>
        <end position="268"/>
    </location>
</feature>
<feature type="region of interest" description="Disordered" evidence="3">
    <location>
        <begin position="340"/>
        <end position="363"/>
    </location>
</feature>
<feature type="binding site" evidence="1">
    <location>
        <begin position="157"/>
        <end position="160"/>
    </location>
    <ligand>
        <name>GTP</name>
        <dbReference type="ChEBI" id="CHEBI:37565"/>
    </ligand>
</feature>
<feature type="binding site" evidence="1">
    <location>
        <begin position="210"/>
        <end position="218"/>
    </location>
    <ligand>
        <name>GTP</name>
        <dbReference type="ChEBI" id="CHEBI:37565"/>
    </ligand>
</feature>
<feature type="binding site" evidence="1">
    <location>
        <position position="291"/>
    </location>
    <ligand>
        <name>Zn(2+)</name>
        <dbReference type="ChEBI" id="CHEBI:29105"/>
    </ligand>
</feature>
<feature type="binding site" evidence="1">
    <location>
        <position position="296"/>
    </location>
    <ligand>
        <name>Zn(2+)</name>
        <dbReference type="ChEBI" id="CHEBI:29105"/>
    </ligand>
</feature>
<feature type="binding site" evidence="1">
    <location>
        <position position="298"/>
    </location>
    <ligand>
        <name>Zn(2+)</name>
        <dbReference type="ChEBI" id="CHEBI:29105"/>
    </ligand>
</feature>
<feature type="binding site" evidence="1">
    <location>
        <position position="304"/>
    </location>
    <ligand>
        <name>Zn(2+)</name>
        <dbReference type="ChEBI" id="CHEBI:29105"/>
    </ligand>
</feature>
<protein>
    <recommendedName>
        <fullName evidence="1">Small ribosomal subunit biogenesis GTPase RsgA</fullName>
        <ecNumber evidence="1">3.6.1.-</ecNumber>
    </recommendedName>
</protein>
<sequence length="363" mass="39147">MSDTSPDYPTLQSIGWPWLGPPEEAAWQAVFAAHPQALPARVVEQHRTGYVVADTPEASVKAESLPEWQRPRFPSHERAAVGDWVLMEGKRIVALLPRRTSIKRGAAGEHYHQQVIAANIDTVFIVCGLDADFNPRRIERYLLLVGGGGAQPVVVLTKADQTEYAEDALAVLEELEAQNIPLRAVNAKDPDSVAALRPWLGDGRTAVLVGSSGAGKSTLTNTLLGTQKMKTNAVRENDSRGRHTTTHRALIPLPSGACLIDTPGMRELKPTGEEDLAEGGFSDVEALAAQCRFNDCAHIAEPGCAVRAAIDAGELDPERVANYMKLRMEVASAAEKLATRVAQNNRGKGSGKRPASVDRPGRH</sequence>
<accession>Q8PGW9</accession>
<comment type="function">
    <text evidence="1">One of several proteins that assist in the late maturation steps of the functional core of the 30S ribosomal subunit. Helps release RbfA from mature subunits. May play a role in the assembly of ribosomal proteins into the subunit. Circularly permuted GTPase that catalyzes slow GTP hydrolysis, GTPase activity is stimulated by the 30S ribosomal subunit.</text>
</comment>
<comment type="cofactor">
    <cofactor evidence="1">
        <name>Zn(2+)</name>
        <dbReference type="ChEBI" id="CHEBI:29105"/>
    </cofactor>
    <text evidence="1">Binds 1 zinc ion per subunit.</text>
</comment>
<comment type="subunit">
    <text evidence="1">Monomer. Associates with 30S ribosomal subunit, binds 16S rRNA.</text>
</comment>
<comment type="subcellular location">
    <subcellularLocation>
        <location evidence="1">Cytoplasm</location>
    </subcellularLocation>
</comment>
<comment type="similarity">
    <text evidence="1">Belongs to the TRAFAC class YlqF/YawG GTPase family. RsgA subfamily.</text>
</comment>
<gene>
    <name evidence="1" type="primary">rsgA</name>
    <name type="ordered locus">XAC3493</name>
</gene>